<keyword id="KW-0963">Cytoplasm</keyword>
<keyword id="KW-0312">Gluconeogenesis</keyword>
<keyword id="KW-0324">Glycolysis</keyword>
<keyword id="KW-0413">Isomerase</keyword>
<keyword id="KW-1185">Reference proteome</keyword>
<name>G6PI_ACET2</name>
<feature type="chain" id="PRO_1000013960" description="Glucose-6-phosphate isomerase">
    <location>
        <begin position="1"/>
        <end position="448"/>
    </location>
</feature>
<feature type="active site" description="Proton donor" evidence="1">
    <location>
        <position position="290"/>
    </location>
</feature>
<feature type="active site" evidence="1">
    <location>
        <position position="311"/>
    </location>
</feature>
<feature type="active site" evidence="1">
    <location>
        <position position="425"/>
    </location>
</feature>
<evidence type="ECO:0000255" key="1">
    <source>
        <dbReference type="HAMAP-Rule" id="MF_00473"/>
    </source>
</evidence>
<reference key="1">
    <citation type="submission" date="2007-02" db="EMBL/GenBank/DDBJ databases">
        <title>Complete sequence of Clostridium thermocellum ATCC 27405.</title>
        <authorList>
            <consortium name="US DOE Joint Genome Institute"/>
            <person name="Copeland A."/>
            <person name="Lucas S."/>
            <person name="Lapidus A."/>
            <person name="Barry K."/>
            <person name="Detter J.C."/>
            <person name="Glavina del Rio T."/>
            <person name="Hammon N."/>
            <person name="Israni S."/>
            <person name="Dalin E."/>
            <person name="Tice H."/>
            <person name="Pitluck S."/>
            <person name="Chertkov O."/>
            <person name="Brettin T."/>
            <person name="Bruce D."/>
            <person name="Han C."/>
            <person name="Tapia R."/>
            <person name="Gilna P."/>
            <person name="Schmutz J."/>
            <person name="Larimer F."/>
            <person name="Land M."/>
            <person name="Hauser L."/>
            <person name="Kyrpides N."/>
            <person name="Mikhailova N."/>
            <person name="Wu J.H.D."/>
            <person name="Newcomb M."/>
            <person name="Richardson P."/>
        </authorList>
    </citation>
    <scope>NUCLEOTIDE SEQUENCE [LARGE SCALE GENOMIC DNA]</scope>
    <source>
        <strain>ATCC 27405 / DSM 1237 / JCM 9322 / NBRC 103400 / NCIMB 10682 / NRRL B-4536 / VPI 7372</strain>
    </source>
</reference>
<organism>
    <name type="scientific">Acetivibrio thermocellus (strain ATCC 27405 / DSM 1237 / JCM 9322 / NBRC 103400 / NCIMB 10682 / NRRL B-4536 / VPI 7372)</name>
    <name type="common">Clostridium thermocellum</name>
    <dbReference type="NCBI Taxonomy" id="203119"/>
    <lineage>
        <taxon>Bacteria</taxon>
        <taxon>Bacillati</taxon>
        <taxon>Bacillota</taxon>
        <taxon>Clostridia</taxon>
        <taxon>Eubacteriales</taxon>
        <taxon>Oscillospiraceae</taxon>
        <taxon>Acetivibrio</taxon>
    </lineage>
</organism>
<gene>
    <name evidence="1" type="primary">pgi</name>
    <name type="ordered locus">Cthe_0217</name>
</gene>
<comment type="function">
    <text evidence="1">Catalyzes the reversible isomerization of glucose-6-phosphate to fructose-6-phosphate.</text>
</comment>
<comment type="catalytic activity">
    <reaction evidence="1">
        <text>alpha-D-glucose 6-phosphate = beta-D-fructose 6-phosphate</text>
        <dbReference type="Rhea" id="RHEA:11816"/>
        <dbReference type="ChEBI" id="CHEBI:57634"/>
        <dbReference type="ChEBI" id="CHEBI:58225"/>
        <dbReference type="EC" id="5.3.1.9"/>
    </reaction>
</comment>
<comment type="pathway">
    <text evidence="1">Carbohydrate biosynthesis; gluconeogenesis.</text>
</comment>
<comment type="pathway">
    <text evidence="1">Carbohydrate degradation; glycolysis; D-glyceraldehyde 3-phosphate and glycerone phosphate from D-glucose: step 2/4.</text>
</comment>
<comment type="subcellular location">
    <subcellularLocation>
        <location evidence="1">Cytoplasm</location>
    </subcellularLocation>
</comment>
<comment type="similarity">
    <text evidence="1">Belongs to the GPI family.</text>
</comment>
<proteinExistence type="inferred from homology"/>
<dbReference type="EC" id="5.3.1.9" evidence="1"/>
<dbReference type="EMBL" id="CP000568">
    <property type="protein sequence ID" value="ABN51458.1"/>
    <property type="molecule type" value="Genomic_DNA"/>
</dbReference>
<dbReference type="RefSeq" id="WP_003512317.1">
    <property type="nucleotide sequence ID" value="NC_009012.1"/>
</dbReference>
<dbReference type="SMR" id="A3DBX9"/>
<dbReference type="STRING" id="203119.Cthe_0217"/>
<dbReference type="GeneID" id="35806063"/>
<dbReference type="KEGG" id="cth:Cthe_0217"/>
<dbReference type="eggNOG" id="COG0166">
    <property type="taxonomic scope" value="Bacteria"/>
</dbReference>
<dbReference type="HOGENOM" id="CLU_037303_0_1_9"/>
<dbReference type="OrthoDB" id="140919at2"/>
<dbReference type="UniPathway" id="UPA00109">
    <property type="reaction ID" value="UER00181"/>
</dbReference>
<dbReference type="UniPathway" id="UPA00138"/>
<dbReference type="Proteomes" id="UP000002145">
    <property type="component" value="Chromosome"/>
</dbReference>
<dbReference type="GO" id="GO:0005829">
    <property type="term" value="C:cytosol"/>
    <property type="evidence" value="ECO:0007669"/>
    <property type="project" value="TreeGrafter"/>
</dbReference>
<dbReference type="GO" id="GO:0097367">
    <property type="term" value="F:carbohydrate derivative binding"/>
    <property type="evidence" value="ECO:0007669"/>
    <property type="project" value="InterPro"/>
</dbReference>
<dbReference type="GO" id="GO:0004347">
    <property type="term" value="F:glucose-6-phosphate isomerase activity"/>
    <property type="evidence" value="ECO:0007669"/>
    <property type="project" value="UniProtKB-UniRule"/>
</dbReference>
<dbReference type="GO" id="GO:0048029">
    <property type="term" value="F:monosaccharide binding"/>
    <property type="evidence" value="ECO:0007669"/>
    <property type="project" value="TreeGrafter"/>
</dbReference>
<dbReference type="GO" id="GO:0006094">
    <property type="term" value="P:gluconeogenesis"/>
    <property type="evidence" value="ECO:0007669"/>
    <property type="project" value="UniProtKB-UniRule"/>
</dbReference>
<dbReference type="GO" id="GO:0051156">
    <property type="term" value="P:glucose 6-phosphate metabolic process"/>
    <property type="evidence" value="ECO:0007669"/>
    <property type="project" value="TreeGrafter"/>
</dbReference>
<dbReference type="GO" id="GO:0006096">
    <property type="term" value="P:glycolytic process"/>
    <property type="evidence" value="ECO:0007669"/>
    <property type="project" value="UniProtKB-UniRule"/>
</dbReference>
<dbReference type="CDD" id="cd05015">
    <property type="entry name" value="SIS_PGI_1"/>
    <property type="match status" value="1"/>
</dbReference>
<dbReference type="CDD" id="cd05016">
    <property type="entry name" value="SIS_PGI_2"/>
    <property type="match status" value="1"/>
</dbReference>
<dbReference type="FunFam" id="3.40.50.10490:FF:000015">
    <property type="entry name" value="Glucose-6-phosphate isomerase"/>
    <property type="match status" value="1"/>
</dbReference>
<dbReference type="FunFam" id="3.40.50.10490:FF:000016">
    <property type="entry name" value="Glucose-6-phosphate isomerase"/>
    <property type="match status" value="1"/>
</dbReference>
<dbReference type="Gene3D" id="3.40.50.10490">
    <property type="entry name" value="Glucose-6-phosphate isomerase like protein, domain 1"/>
    <property type="match status" value="3"/>
</dbReference>
<dbReference type="HAMAP" id="MF_00473">
    <property type="entry name" value="G6P_isomerase"/>
    <property type="match status" value="1"/>
</dbReference>
<dbReference type="InterPro" id="IPR001672">
    <property type="entry name" value="G6P_Isomerase"/>
</dbReference>
<dbReference type="InterPro" id="IPR018189">
    <property type="entry name" value="Phosphoglucose_isomerase_CS"/>
</dbReference>
<dbReference type="InterPro" id="IPR046348">
    <property type="entry name" value="SIS_dom_sf"/>
</dbReference>
<dbReference type="InterPro" id="IPR035476">
    <property type="entry name" value="SIS_PGI_1"/>
</dbReference>
<dbReference type="InterPro" id="IPR035482">
    <property type="entry name" value="SIS_PGI_2"/>
</dbReference>
<dbReference type="NCBIfam" id="NF010697">
    <property type="entry name" value="PRK14097.1"/>
    <property type="match status" value="1"/>
</dbReference>
<dbReference type="PANTHER" id="PTHR11469">
    <property type="entry name" value="GLUCOSE-6-PHOSPHATE ISOMERASE"/>
    <property type="match status" value="1"/>
</dbReference>
<dbReference type="PANTHER" id="PTHR11469:SF1">
    <property type="entry name" value="GLUCOSE-6-PHOSPHATE ISOMERASE"/>
    <property type="match status" value="1"/>
</dbReference>
<dbReference type="Pfam" id="PF00342">
    <property type="entry name" value="PGI"/>
    <property type="match status" value="1"/>
</dbReference>
<dbReference type="PRINTS" id="PR00662">
    <property type="entry name" value="G6PISOMERASE"/>
</dbReference>
<dbReference type="SUPFAM" id="SSF53697">
    <property type="entry name" value="SIS domain"/>
    <property type="match status" value="1"/>
</dbReference>
<dbReference type="PROSITE" id="PS00765">
    <property type="entry name" value="P_GLUCOSE_ISOMERASE_1"/>
    <property type="match status" value="1"/>
</dbReference>
<dbReference type="PROSITE" id="PS00174">
    <property type="entry name" value="P_GLUCOSE_ISOMERASE_2"/>
    <property type="match status" value="1"/>
</dbReference>
<dbReference type="PROSITE" id="PS51463">
    <property type="entry name" value="P_GLUCOSE_ISOMERASE_3"/>
    <property type="match status" value="1"/>
</dbReference>
<sequence>MERIKFDYSKALPFVSEREVAYFENFVRSAHDMLHNKTGAGNDFVGWVDLPVNYDREEFARIKAAAEKIKSDSDALVVIGIGGSYLGARAAIEMLSHSFHNLMPKSKRNAPEIYFVGNNISSTYIADLLEVIEGKEISVNVISKSGTTTEPAIAFRIFKEYMENKYGKDGASKRIYATTDKEKGALRKLATEEGYETFVVPDDIGGRFSVLTAVGLLPIAVAGIDIDSMMKGAADARELYSNPNLMENDCYKYAAVRNALYRKNKTIEIMVNYEPSLHYFTEWWKQLYGESEGKDQKGIFPAGVDFTTDLHSMGQYIQDGLRNIFETVIRVEKPRKNIVIKEEKDNLDGLNFIAGKDVDYVNKKAMEGTVLAHTDGGVPNLVVTVPELSAYYFGNMVYFFEKACGISGYLLGVNPFDQPGVEAYKKNMFALLGKPGYEEQRKKLEERL</sequence>
<accession>A3DBX9</accession>
<protein>
    <recommendedName>
        <fullName evidence="1">Glucose-6-phosphate isomerase</fullName>
        <shortName evidence="1">GPI</shortName>
        <ecNumber evidence="1">5.3.1.9</ecNumber>
    </recommendedName>
    <alternativeName>
        <fullName evidence="1">Phosphoglucose isomerase</fullName>
        <shortName evidence="1">PGI</shortName>
    </alternativeName>
    <alternativeName>
        <fullName evidence="1">Phosphohexose isomerase</fullName>
        <shortName evidence="1">PHI</shortName>
    </alternativeName>
</protein>